<name>PRMA_BURM1</name>
<gene>
    <name evidence="1" type="primary">prmA</name>
    <name type="ordered locus">Bmul_2781</name>
    <name type="ordered locus">BMULJ_00456</name>
</gene>
<protein>
    <recommendedName>
        <fullName evidence="1">Ribosomal protein L11 methyltransferase</fullName>
        <shortName evidence="1">L11 Mtase</shortName>
        <ecNumber evidence="1">2.1.1.-</ecNumber>
    </recommendedName>
</protein>
<organism>
    <name type="scientific">Burkholderia multivorans (strain ATCC 17616 / 249)</name>
    <dbReference type="NCBI Taxonomy" id="395019"/>
    <lineage>
        <taxon>Bacteria</taxon>
        <taxon>Pseudomonadati</taxon>
        <taxon>Pseudomonadota</taxon>
        <taxon>Betaproteobacteria</taxon>
        <taxon>Burkholderiales</taxon>
        <taxon>Burkholderiaceae</taxon>
        <taxon>Burkholderia</taxon>
        <taxon>Burkholderia cepacia complex</taxon>
    </lineage>
</organism>
<feature type="chain" id="PRO_1000192592" description="Ribosomal protein L11 methyltransferase">
    <location>
        <begin position="1"/>
        <end position="300"/>
    </location>
</feature>
<feature type="binding site" evidence="1">
    <location>
        <position position="152"/>
    </location>
    <ligand>
        <name>S-adenosyl-L-methionine</name>
        <dbReference type="ChEBI" id="CHEBI:59789"/>
    </ligand>
</feature>
<feature type="binding site" evidence="1">
    <location>
        <position position="173"/>
    </location>
    <ligand>
        <name>S-adenosyl-L-methionine</name>
        <dbReference type="ChEBI" id="CHEBI:59789"/>
    </ligand>
</feature>
<feature type="binding site" evidence="1">
    <location>
        <position position="195"/>
    </location>
    <ligand>
        <name>S-adenosyl-L-methionine</name>
        <dbReference type="ChEBI" id="CHEBI:59789"/>
    </ligand>
</feature>
<feature type="binding site" evidence="1">
    <location>
        <position position="234"/>
    </location>
    <ligand>
        <name>S-adenosyl-L-methionine</name>
        <dbReference type="ChEBI" id="CHEBI:59789"/>
    </ligand>
</feature>
<keyword id="KW-0963">Cytoplasm</keyword>
<keyword id="KW-0489">Methyltransferase</keyword>
<keyword id="KW-1185">Reference proteome</keyword>
<keyword id="KW-0949">S-adenosyl-L-methionine</keyword>
<keyword id="KW-0808">Transferase</keyword>
<accession>A9AI41</accession>
<reference key="1">
    <citation type="submission" date="2007-10" db="EMBL/GenBank/DDBJ databases">
        <title>Complete sequence of chromosome 1 of Burkholderia multivorans ATCC 17616.</title>
        <authorList>
            <person name="Copeland A."/>
            <person name="Lucas S."/>
            <person name="Lapidus A."/>
            <person name="Barry K."/>
            <person name="Glavina del Rio T."/>
            <person name="Dalin E."/>
            <person name="Tice H."/>
            <person name="Pitluck S."/>
            <person name="Chain P."/>
            <person name="Malfatti S."/>
            <person name="Shin M."/>
            <person name="Vergez L."/>
            <person name="Schmutz J."/>
            <person name="Larimer F."/>
            <person name="Land M."/>
            <person name="Hauser L."/>
            <person name="Kyrpides N."/>
            <person name="Kim E."/>
            <person name="Tiedje J."/>
            <person name="Richardson P."/>
        </authorList>
    </citation>
    <scope>NUCLEOTIDE SEQUENCE [LARGE SCALE GENOMIC DNA]</scope>
    <source>
        <strain>ATCC 17616 / 249</strain>
    </source>
</reference>
<reference key="2">
    <citation type="submission" date="2007-04" db="EMBL/GenBank/DDBJ databases">
        <title>Complete genome sequence of Burkholderia multivorans ATCC 17616.</title>
        <authorList>
            <person name="Ohtsubo Y."/>
            <person name="Yamashita A."/>
            <person name="Kurokawa K."/>
            <person name="Takami H."/>
            <person name="Yuhara S."/>
            <person name="Nishiyama E."/>
            <person name="Endo R."/>
            <person name="Miyazaki R."/>
            <person name="Ono A."/>
            <person name="Yano K."/>
            <person name="Ito M."/>
            <person name="Sota M."/>
            <person name="Yuji N."/>
            <person name="Hattori M."/>
            <person name="Tsuda M."/>
        </authorList>
    </citation>
    <scope>NUCLEOTIDE SEQUENCE [LARGE SCALE GENOMIC DNA]</scope>
    <source>
        <strain>ATCC 17616 / 249</strain>
    </source>
</reference>
<evidence type="ECO:0000255" key="1">
    <source>
        <dbReference type="HAMAP-Rule" id="MF_00735"/>
    </source>
</evidence>
<comment type="function">
    <text evidence="1">Methylates ribosomal protein L11.</text>
</comment>
<comment type="catalytic activity">
    <reaction evidence="1">
        <text>L-lysyl-[protein] + 3 S-adenosyl-L-methionine = N(6),N(6),N(6)-trimethyl-L-lysyl-[protein] + 3 S-adenosyl-L-homocysteine + 3 H(+)</text>
        <dbReference type="Rhea" id="RHEA:54192"/>
        <dbReference type="Rhea" id="RHEA-COMP:9752"/>
        <dbReference type="Rhea" id="RHEA-COMP:13826"/>
        <dbReference type="ChEBI" id="CHEBI:15378"/>
        <dbReference type="ChEBI" id="CHEBI:29969"/>
        <dbReference type="ChEBI" id="CHEBI:57856"/>
        <dbReference type="ChEBI" id="CHEBI:59789"/>
        <dbReference type="ChEBI" id="CHEBI:61961"/>
    </reaction>
</comment>
<comment type="subcellular location">
    <subcellularLocation>
        <location evidence="1">Cytoplasm</location>
    </subcellularLocation>
</comment>
<comment type="similarity">
    <text evidence="1">Belongs to the methyltransferase superfamily. PrmA family.</text>
</comment>
<proteinExistence type="inferred from homology"/>
<sequence length="300" mass="32496">MSYRELVVELAREHAEALSDALLELGALSVSVEDADADTPDEQPLFGEPGLVPERTAWQHSRVIALLSPDHEPAVLLAAAANEIGLDATPKFDVREVEEQDWVRLTQSQFEPIPIGERIWVVPSWHDAPDPDALVLELDPGLAFGTGSHPTTRLCMEWLEQSVQPGQSVLDYGCGSGILAILAKKCGANPVVGIDIDPQAVESARQNSERNRAEVTYGLPDACPAGEFDIVVANILSNPLKLMASMLASKVKPGGRIALSGVLARQADEVAAVYARYVDISVWREHEGWVCLAGTRRESH</sequence>
<dbReference type="EC" id="2.1.1.-" evidence="1"/>
<dbReference type="EMBL" id="CP000868">
    <property type="protein sequence ID" value="ABX16465.1"/>
    <property type="molecule type" value="Genomic_DNA"/>
</dbReference>
<dbReference type="EMBL" id="AP009385">
    <property type="protein sequence ID" value="BAG42423.1"/>
    <property type="molecule type" value="Genomic_DNA"/>
</dbReference>
<dbReference type="RefSeq" id="WP_006400397.1">
    <property type="nucleotide sequence ID" value="NC_010804.1"/>
</dbReference>
<dbReference type="SMR" id="A9AI41"/>
<dbReference type="STRING" id="395019.BMULJ_00456"/>
<dbReference type="GeneID" id="89568885"/>
<dbReference type="KEGG" id="bmj:BMULJ_00456"/>
<dbReference type="KEGG" id="bmu:Bmul_2781"/>
<dbReference type="eggNOG" id="COG2264">
    <property type="taxonomic scope" value="Bacteria"/>
</dbReference>
<dbReference type="HOGENOM" id="CLU_049382_4_1_4"/>
<dbReference type="Proteomes" id="UP000008815">
    <property type="component" value="Chromosome 1"/>
</dbReference>
<dbReference type="GO" id="GO:0005829">
    <property type="term" value="C:cytosol"/>
    <property type="evidence" value="ECO:0007669"/>
    <property type="project" value="TreeGrafter"/>
</dbReference>
<dbReference type="GO" id="GO:0016279">
    <property type="term" value="F:protein-lysine N-methyltransferase activity"/>
    <property type="evidence" value="ECO:0007669"/>
    <property type="project" value="TreeGrafter"/>
</dbReference>
<dbReference type="GO" id="GO:0032259">
    <property type="term" value="P:methylation"/>
    <property type="evidence" value="ECO:0007669"/>
    <property type="project" value="UniProtKB-KW"/>
</dbReference>
<dbReference type="CDD" id="cd02440">
    <property type="entry name" value="AdoMet_MTases"/>
    <property type="match status" value="1"/>
</dbReference>
<dbReference type="Gene3D" id="3.40.50.150">
    <property type="entry name" value="Vaccinia Virus protein VP39"/>
    <property type="match status" value="1"/>
</dbReference>
<dbReference type="HAMAP" id="MF_00735">
    <property type="entry name" value="Methyltr_PrmA"/>
    <property type="match status" value="1"/>
</dbReference>
<dbReference type="InterPro" id="IPR050078">
    <property type="entry name" value="Ribosomal_L11_MeTrfase_PrmA"/>
</dbReference>
<dbReference type="InterPro" id="IPR004498">
    <property type="entry name" value="Ribosomal_PrmA_MeTrfase"/>
</dbReference>
<dbReference type="InterPro" id="IPR029063">
    <property type="entry name" value="SAM-dependent_MTases_sf"/>
</dbReference>
<dbReference type="NCBIfam" id="TIGR00406">
    <property type="entry name" value="prmA"/>
    <property type="match status" value="1"/>
</dbReference>
<dbReference type="PANTHER" id="PTHR43648">
    <property type="entry name" value="ELECTRON TRANSFER FLAVOPROTEIN BETA SUBUNIT LYSINE METHYLTRANSFERASE"/>
    <property type="match status" value="1"/>
</dbReference>
<dbReference type="PANTHER" id="PTHR43648:SF1">
    <property type="entry name" value="ELECTRON TRANSFER FLAVOPROTEIN BETA SUBUNIT LYSINE METHYLTRANSFERASE"/>
    <property type="match status" value="1"/>
</dbReference>
<dbReference type="Pfam" id="PF06325">
    <property type="entry name" value="PrmA"/>
    <property type="match status" value="1"/>
</dbReference>
<dbReference type="PIRSF" id="PIRSF000401">
    <property type="entry name" value="RPL11_MTase"/>
    <property type="match status" value="1"/>
</dbReference>
<dbReference type="SUPFAM" id="SSF53335">
    <property type="entry name" value="S-adenosyl-L-methionine-dependent methyltransferases"/>
    <property type="match status" value="1"/>
</dbReference>